<accession>Q7NAM1</accession>
<protein>
    <recommendedName>
        <fullName evidence="1">Small ribosomal subunit protein bS6</fullName>
    </recommendedName>
    <alternativeName>
        <fullName evidence="3">30S ribosomal protein S6</fullName>
    </alternativeName>
</protein>
<feature type="chain" id="PRO_0000176794" description="Small ribosomal subunit protein bS6">
    <location>
        <begin position="1"/>
        <end position="191"/>
    </location>
</feature>
<feature type="region of interest" description="Disordered" evidence="2">
    <location>
        <begin position="168"/>
        <end position="191"/>
    </location>
</feature>
<feature type="compositionally biased region" description="Basic and acidic residues" evidence="2">
    <location>
        <begin position="181"/>
        <end position="191"/>
    </location>
</feature>
<proteinExistence type="inferred from homology"/>
<evidence type="ECO:0000255" key="1">
    <source>
        <dbReference type="HAMAP-Rule" id="MF_00360"/>
    </source>
</evidence>
<evidence type="ECO:0000256" key="2">
    <source>
        <dbReference type="SAM" id="MobiDB-lite"/>
    </source>
</evidence>
<evidence type="ECO:0000305" key="3"/>
<name>RS6_MYCGA</name>
<organism>
    <name type="scientific">Mycoplasmoides gallisepticum (strain R(low / passage 15 / clone 2))</name>
    <name type="common">Mycoplasma gallisepticum</name>
    <dbReference type="NCBI Taxonomy" id="710127"/>
    <lineage>
        <taxon>Bacteria</taxon>
        <taxon>Bacillati</taxon>
        <taxon>Mycoplasmatota</taxon>
        <taxon>Mycoplasmoidales</taxon>
        <taxon>Mycoplasmoidaceae</taxon>
        <taxon>Mycoplasmoides</taxon>
    </lineage>
</organism>
<keyword id="KW-1185">Reference proteome</keyword>
<keyword id="KW-0687">Ribonucleoprotein</keyword>
<keyword id="KW-0689">Ribosomal protein</keyword>
<keyword id="KW-0694">RNA-binding</keyword>
<keyword id="KW-0699">rRNA-binding</keyword>
<comment type="function">
    <text evidence="1">Binds together with bS18 to 16S ribosomal RNA.</text>
</comment>
<comment type="similarity">
    <text evidence="1">Belongs to the bacterial ribosomal protein bS6 family.</text>
</comment>
<dbReference type="EMBL" id="AE015450">
    <property type="protein sequence ID" value="AAP56965.1"/>
    <property type="molecule type" value="Genomic_DNA"/>
</dbReference>
<dbReference type="RefSeq" id="WP_011113874.1">
    <property type="nucleotide sequence ID" value="NC_004829.2"/>
</dbReference>
<dbReference type="SMR" id="Q7NAM1"/>
<dbReference type="GeneID" id="93510451"/>
<dbReference type="KEGG" id="mga:MGA_0423"/>
<dbReference type="HOGENOM" id="CLU_1420073_0_0_14"/>
<dbReference type="OrthoDB" id="397558at2"/>
<dbReference type="Proteomes" id="UP000001418">
    <property type="component" value="Chromosome"/>
</dbReference>
<dbReference type="GO" id="GO:1990904">
    <property type="term" value="C:ribonucleoprotein complex"/>
    <property type="evidence" value="ECO:0007669"/>
    <property type="project" value="UniProtKB-KW"/>
</dbReference>
<dbReference type="GO" id="GO:0005840">
    <property type="term" value="C:ribosome"/>
    <property type="evidence" value="ECO:0007669"/>
    <property type="project" value="UniProtKB-KW"/>
</dbReference>
<dbReference type="GO" id="GO:0019843">
    <property type="term" value="F:rRNA binding"/>
    <property type="evidence" value="ECO:0007669"/>
    <property type="project" value="UniProtKB-UniRule"/>
</dbReference>
<dbReference type="GO" id="GO:0003735">
    <property type="term" value="F:structural constituent of ribosome"/>
    <property type="evidence" value="ECO:0007669"/>
    <property type="project" value="InterPro"/>
</dbReference>
<dbReference type="GO" id="GO:0006412">
    <property type="term" value="P:translation"/>
    <property type="evidence" value="ECO:0007669"/>
    <property type="project" value="UniProtKB-UniRule"/>
</dbReference>
<dbReference type="CDD" id="cd00473">
    <property type="entry name" value="bS6"/>
    <property type="match status" value="1"/>
</dbReference>
<dbReference type="Gene3D" id="3.30.70.60">
    <property type="match status" value="1"/>
</dbReference>
<dbReference type="HAMAP" id="MF_00360">
    <property type="entry name" value="Ribosomal_bS6"/>
    <property type="match status" value="1"/>
</dbReference>
<dbReference type="InterPro" id="IPR000529">
    <property type="entry name" value="Ribosomal_bS6"/>
</dbReference>
<dbReference type="InterPro" id="IPR035980">
    <property type="entry name" value="Ribosomal_bS6_sf"/>
</dbReference>
<dbReference type="InterPro" id="IPR020814">
    <property type="entry name" value="Ribosomal_S6_plastid/chlpt"/>
</dbReference>
<dbReference type="InterPro" id="IPR014717">
    <property type="entry name" value="Transl_elong_EF1B/ribsomal_bS6"/>
</dbReference>
<dbReference type="NCBIfam" id="TIGR00166">
    <property type="entry name" value="S6"/>
    <property type="match status" value="1"/>
</dbReference>
<dbReference type="Pfam" id="PF01250">
    <property type="entry name" value="Ribosomal_S6"/>
    <property type="match status" value="1"/>
</dbReference>
<dbReference type="SUPFAM" id="SSF54995">
    <property type="entry name" value="Ribosomal protein S6"/>
    <property type="match status" value="1"/>
</dbReference>
<sequence length="191" mass="22085">MAKYEIMLMVSGQLNQNQAQAVNDELKAVFGKTEITEEYLGQKTLEYPIKKEVTAHYFNLFLTSDGKSVHEYKRLASIRTDVLRILILNTEKEFGYRASQNAKKVALAKQKQARYNDIMKQVQENGYFQIKGSKRNSRVEKAGAKEVWMLREKFGEDLPEQKIPVLRKVNLTRKPTPNKSSENKQKVEKQA</sequence>
<reference key="1">
    <citation type="journal article" date="2003" name="Microbiology">
        <title>The complete genome sequence of the avian pathogen Mycoplasma gallisepticum strain R(low).</title>
        <authorList>
            <person name="Papazisi L."/>
            <person name="Gorton T.S."/>
            <person name="Kutish G."/>
            <person name="Markham P.F."/>
            <person name="Browning G.F."/>
            <person name="Nguyen D.K."/>
            <person name="Swartzell S."/>
            <person name="Madan A."/>
            <person name="Mahairas G."/>
            <person name="Geary S.J."/>
        </authorList>
    </citation>
    <scope>NUCLEOTIDE SEQUENCE [LARGE SCALE GENOMIC DNA]</scope>
    <source>
        <strain>R(low / passage 15 / clone 2)</strain>
    </source>
</reference>
<gene>
    <name evidence="1" type="primary">rpsF</name>
    <name type="ordered locus">MYCGA6150</name>
    <name type="ORF">MGA_0423</name>
</gene>